<gene>
    <name type="primary">76</name>
</gene>
<accession>Q05291</accession>
<protein>
    <recommendedName>
        <fullName>Gene 76 protein</fullName>
    </recommendedName>
    <alternativeName>
        <fullName>Gp76</fullName>
    </alternativeName>
</protein>
<organism>
    <name type="scientific">Mycobacterium phage L5</name>
    <name type="common">Mycobacteriophage L5</name>
    <dbReference type="NCBI Taxonomy" id="31757"/>
    <lineage>
        <taxon>Viruses</taxon>
        <taxon>Duplodnaviria</taxon>
        <taxon>Heunggongvirae</taxon>
        <taxon>Uroviricota</taxon>
        <taxon>Caudoviricetes</taxon>
        <taxon>Fromanvirus</taxon>
    </lineage>
</organism>
<name>VG76_BPML5</name>
<feature type="chain" id="PRO_0000164819" description="Gene 76 protein">
    <location>
        <begin position="1"/>
        <end position="91"/>
    </location>
</feature>
<feature type="region of interest" description="Disordered" evidence="1">
    <location>
        <begin position="58"/>
        <end position="81"/>
    </location>
</feature>
<dbReference type="EMBL" id="Z18946">
    <property type="protein sequence ID" value="CAA79452.1"/>
    <property type="molecule type" value="Genomic_DNA"/>
</dbReference>
<dbReference type="PIR" id="S31021">
    <property type="entry name" value="S31021"/>
</dbReference>
<dbReference type="RefSeq" id="NP_039740.1">
    <property type="nucleotide sequence ID" value="NC_001335.1"/>
</dbReference>
<dbReference type="GeneID" id="2942979"/>
<dbReference type="KEGG" id="vg:2942979"/>
<dbReference type="OrthoDB" id="19134at10239"/>
<dbReference type="Proteomes" id="UP000002123">
    <property type="component" value="Genome"/>
</dbReference>
<dbReference type="InterPro" id="IPR055623">
    <property type="entry name" value="DUF7199"/>
</dbReference>
<dbReference type="Pfam" id="PF23829">
    <property type="entry name" value="DUF7199"/>
    <property type="match status" value="1"/>
</dbReference>
<reference key="1">
    <citation type="journal article" date="1993" name="Mol. Microbiol.">
        <title>DNA sequence, structure and gene expression of mycobacteriophage L5: a phage system for mycobacterial genetics.</title>
        <authorList>
            <person name="Hatfull G.F."/>
            <person name="Sarkis G.J."/>
        </authorList>
    </citation>
    <scope>NUCLEOTIDE SEQUENCE [LARGE SCALE GENOMIC DNA]</scope>
</reference>
<keyword id="KW-1185">Reference proteome</keyword>
<evidence type="ECO:0000256" key="1">
    <source>
        <dbReference type="SAM" id="MobiDB-lite"/>
    </source>
</evidence>
<sequence>MKAWHVVLLMCLAVVLGNLPGIIAEASASPLCEYRSAAHIAEHGGKVADDAWHIKHGELPSCDESPKGEARRDNDNRDGGKSRFCRKRWYC</sequence>
<proteinExistence type="predicted"/>
<organismHost>
    <name type="scientific">Mycobacterium</name>
    <dbReference type="NCBI Taxonomy" id="1763"/>
</organismHost>